<evidence type="ECO:0000250" key="1"/>
<evidence type="ECO:0000255" key="2">
    <source>
        <dbReference type="HAMAP-Rule" id="MF_00118"/>
    </source>
</evidence>
<feature type="chain" id="PRO_1000201390" description="Elongation factor Tu">
    <location>
        <begin position="1"/>
        <end position="394"/>
    </location>
</feature>
<feature type="domain" description="tr-type G">
    <location>
        <begin position="10"/>
        <end position="205"/>
    </location>
</feature>
<feature type="region of interest" description="G1" evidence="1">
    <location>
        <begin position="19"/>
        <end position="26"/>
    </location>
</feature>
<feature type="region of interest" description="G2" evidence="1">
    <location>
        <begin position="61"/>
        <end position="65"/>
    </location>
</feature>
<feature type="region of interest" description="G3" evidence="1">
    <location>
        <begin position="82"/>
        <end position="85"/>
    </location>
</feature>
<feature type="region of interest" description="G4" evidence="1">
    <location>
        <begin position="137"/>
        <end position="140"/>
    </location>
</feature>
<feature type="region of interest" description="G5" evidence="1">
    <location>
        <begin position="173"/>
        <end position="175"/>
    </location>
</feature>
<feature type="binding site" evidence="2">
    <location>
        <begin position="19"/>
        <end position="26"/>
    </location>
    <ligand>
        <name>GTP</name>
        <dbReference type="ChEBI" id="CHEBI:37565"/>
    </ligand>
</feature>
<feature type="binding site" evidence="2">
    <location>
        <position position="26"/>
    </location>
    <ligand>
        <name>Mg(2+)</name>
        <dbReference type="ChEBI" id="CHEBI:18420"/>
    </ligand>
</feature>
<feature type="binding site" evidence="2">
    <location>
        <begin position="82"/>
        <end position="86"/>
    </location>
    <ligand>
        <name>GTP</name>
        <dbReference type="ChEBI" id="CHEBI:37565"/>
    </ligand>
</feature>
<feature type="binding site" evidence="2">
    <location>
        <begin position="137"/>
        <end position="140"/>
    </location>
    <ligand>
        <name>GTP</name>
        <dbReference type="ChEBI" id="CHEBI:37565"/>
    </ligand>
</feature>
<keyword id="KW-0963">Cytoplasm</keyword>
<keyword id="KW-0251">Elongation factor</keyword>
<keyword id="KW-0342">GTP-binding</keyword>
<keyword id="KW-0378">Hydrolase</keyword>
<keyword id="KW-0460">Magnesium</keyword>
<keyword id="KW-0479">Metal-binding</keyword>
<keyword id="KW-0547">Nucleotide-binding</keyword>
<keyword id="KW-0648">Protein biosynthesis</keyword>
<keyword id="KW-1185">Reference proteome</keyword>
<proteinExistence type="inferred from homology"/>
<gene>
    <name evidence="2" type="primary">tuf</name>
    <name type="ordered locus">BT0476</name>
</gene>
<dbReference type="EC" id="3.6.5.3" evidence="2"/>
<dbReference type="EMBL" id="CP000049">
    <property type="protein sequence ID" value="AAX17804.1"/>
    <property type="molecule type" value="Genomic_DNA"/>
</dbReference>
<dbReference type="RefSeq" id="WP_011772423.1">
    <property type="nucleotide sequence ID" value="NZ_CP073176.1"/>
</dbReference>
<dbReference type="SMR" id="A1QZR2"/>
<dbReference type="KEGG" id="btu:BT0476"/>
<dbReference type="eggNOG" id="COG0050">
    <property type="taxonomic scope" value="Bacteria"/>
</dbReference>
<dbReference type="HOGENOM" id="CLU_007265_0_0_12"/>
<dbReference type="Proteomes" id="UP000001205">
    <property type="component" value="Chromosome"/>
</dbReference>
<dbReference type="GO" id="GO:0005737">
    <property type="term" value="C:cytoplasm"/>
    <property type="evidence" value="ECO:0007669"/>
    <property type="project" value="UniProtKB-SubCell"/>
</dbReference>
<dbReference type="GO" id="GO:0005525">
    <property type="term" value="F:GTP binding"/>
    <property type="evidence" value="ECO:0007669"/>
    <property type="project" value="UniProtKB-UniRule"/>
</dbReference>
<dbReference type="GO" id="GO:0003924">
    <property type="term" value="F:GTPase activity"/>
    <property type="evidence" value="ECO:0007669"/>
    <property type="project" value="InterPro"/>
</dbReference>
<dbReference type="GO" id="GO:0003746">
    <property type="term" value="F:translation elongation factor activity"/>
    <property type="evidence" value="ECO:0007669"/>
    <property type="project" value="UniProtKB-UniRule"/>
</dbReference>
<dbReference type="CDD" id="cd03697">
    <property type="entry name" value="EFTU_II"/>
    <property type="match status" value="1"/>
</dbReference>
<dbReference type="CDD" id="cd03707">
    <property type="entry name" value="EFTU_III"/>
    <property type="match status" value="1"/>
</dbReference>
<dbReference type="FunFam" id="2.40.30.10:FF:000001">
    <property type="entry name" value="Elongation factor Tu"/>
    <property type="match status" value="1"/>
</dbReference>
<dbReference type="FunFam" id="3.40.50.300:FF:000576">
    <property type="entry name" value="Elongation factor Tu"/>
    <property type="match status" value="1"/>
</dbReference>
<dbReference type="Gene3D" id="3.40.50.300">
    <property type="entry name" value="P-loop containing nucleotide triphosphate hydrolases"/>
    <property type="match status" value="1"/>
</dbReference>
<dbReference type="Gene3D" id="2.40.30.10">
    <property type="entry name" value="Translation factors"/>
    <property type="match status" value="2"/>
</dbReference>
<dbReference type="HAMAP" id="MF_00118_B">
    <property type="entry name" value="EF_Tu_B"/>
    <property type="match status" value="1"/>
</dbReference>
<dbReference type="InterPro" id="IPR050055">
    <property type="entry name" value="EF-Tu_GTPase"/>
</dbReference>
<dbReference type="InterPro" id="IPR004161">
    <property type="entry name" value="EFTu-like_2"/>
</dbReference>
<dbReference type="InterPro" id="IPR033720">
    <property type="entry name" value="EFTU_2"/>
</dbReference>
<dbReference type="InterPro" id="IPR031157">
    <property type="entry name" value="G_TR_CS"/>
</dbReference>
<dbReference type="InterPro" id="IPR027417">
    <property type="entry name" value="P-loop_NTPase"/>
</dbReference>
<dbReference type="InterPro" id="IPR005225">
    <property type="entry name" value="Small_GTP-bd"/>
</dbReference>
<dbReference type="InterPro" id="IPR000795">
    <property type="entry name" value="T_Tr_GTP-bd_dom"/>
</dbReference>
<dbReference type="InterPro" id="IPR009000">
    <property type="entry name" value="Transl_B-barrel_sf"/>
</dbReference>
<dbReference type="InterPro" id="IPR009001">
    <property type="entry name" value="Transl_elong_EF1A/Init_IF2_C"/>
</dbReference>
<dbReference type="InterPro" id="IPR004541">
    <property type="entry name" value="Transl_elong_EFTu/EF1A_bac/org"/>
</dbReference>
<dbReference type="InterPro" id="IPR004160">
    <property type="entry name" value="Transl_elong_EFTu/EF1A_C"/>
</dbReference>
<dbReference type="NCBIfam" id="TIGR00485">
    <property type="entry name" value="EF-Tu"/>
    <property type="match status" value="1"/>
</dbReference>
<dbReference type="NCBIfam" id="NF000766">
    <property type="entry name" value="PRK00049.1"/>
    <property type="match status" value="1"/>
</dbReference>
<dbReference type="NCBIfam" id="NF009372">
    <property type="entry name" value="PRK12735.1"/>
    <property type="match status" value="1"/>
</dbReference>
<dbReference type="NCBIfam" id="NF009373">
    <property type="entry name" value="PRK12736.1"/>
    <property type="match status" value="1"/>
</dbReference>
<dbReference type="NCBIfam" id="TIGR00231">
    <property type="entry name" value="small_GTP"/>
    <property type="match status" value="1"/>
</dbReference>
<dbReference type="PANTHER" id="PTHR43721:SF22">
    <property type="entry name" value="ELONGATION FACTOR TU, MITOCHONDRIAL"/>
    <property type="match status" value="1"/>
</dbReference>
<dbReference type="PANTHER" id="PTHR43721">
    <property type="entry name" value="ELONGATION FACTOR TU-RELATED"/>
    <property type="match status" value="1"/>
</dbReference>
<dbReference type="Pfam" id="PF00009">
    <property type="entry name" value="GTP_EFTU"/>
    <property type="match status" value="1"/>
</dbReference>
<dbReference type="Pfam" id="PF03144">
    <property type="entry name" value="GTP_EFTU_D2"/>
    <property type="match status" value="1"/>
</dbReference>
<dbReference type="Pfam" id="PF03143">
    <property type="entry name" value="GTP_EFTU_D3"/>
    <property type="match status" value="1"/>
</dbReference>
<dbReference type="PRINTS" id="PR00315">
    <property type="entry name" value="ELONGATNFCT"/>
</dbReference>
<dbReference type="SUPFAM" id="SSF50465">
    <property type="entry name" value="EF-Tu/eEF-1alpha/eIF2-gamma C-terminal domain"/>
    <property type="match status" value="1"/>
</dbReference>
<dbReference type="SUPFAM" id="SSF52540">
    <property type="entry name" value="P-loop containing nucleoside triphosphate hydrolases"/>
    <property type="match status" value="1"/>
</dbReference>
<dbReference type="SUPFAM" id="SSF50447">
    <property type="entry name" value="Translation proteins"/>
    <property type="match status" value="1"/>
</dbReference>
<dbReference type="PROSITE" id="PS00301">
    <property type="entry name" value="G_TR_1"/>
    <property type="match status" value="1"/>
</dbReference>
<dbReference type="PROSITE" id="PS51722">
    <property type="entry name" value="G_TR_2"/>
    <property type="match status" value="1"/>
</dbReference>
<comment type="function">
    <text evidence="2">GTP hydrolase that promotes the GTP-dependent binding of aminoacyl-tRNA to the A-site of ribosomes during protein biosynthesis.</text>
</comment>
<comment type="catalytic activity">
    <reaction evidence="2">
        <text>GTP + H2O = GDP + phosphate + H(+)</text>
        <dbReference type="Rhea" id="RHEA:19669"/>
        <dbReference type="ChEBI" id="CHEBI:15377"/>
        <dbReference type="ChEBI" id="CHEBI:15378"/>
        <dbReference type="ChEBI" id="CHEBI:37565"/>
        <dbReference type="ChEBI" id="CHEBI:43474"/>
        <dbReference type="ChEBI" id="CHEBI:58189"/>
        <dbReference type="EC" id="3.6.5.3"/>
    </reaction>
    <physiologicalReaction direction="left-to-right" evidence="2">
        <dbReference type="Rhea" id="RHEA:19670"/>
    </physiologicalReaction>
</comment>
<comment type="subunit">
    <text evidence="2">Monomer.</text>
</comment>
<comment type="subcellular location">
    <subcellularLocation>
        <location evidence="2">Cytoplasm</location>
    </subcellularLocation>
</comment>
<comment type="similarity">
    <text evidence="2">Belongs to the TRAFAC class translation factor GTPase superfamily. Classic translation factor GTPase family. EF-Tu/EF-1A subfamily.</text>
</comment>
<accession>A1QZR2</accession>
<name>EFTU_BORT9</name>
<reference key="1">
    <citation type="submission" date="2004-12" db="EMBL/GenBank/DDBJ databases">
        <title>The genome sequence of Borrelia hermsii and Borrelia turicatae: comparative analysis of two agents of endemic N. America relapsing fever.</title>
        <authorList>
            <person name="Porcella S.F."/>
            <person name="Raffel S.J."/>
            <person name="Schrumpf M.E."/>
            <person name="Montgomery B."/>
            <person name="Smith T."/>
            <person name="Schwan T.G."/>
        </authorList>
    </citation>
    <scope>NUCLEOTIDE SEQUENCE [LARGE SCALE GENOMIC DNA]</scope>
    <source>
        <strain>91E135</strain>
    </source>
</reference>
<sequence>MAKEVFQRTKPHMNVGTIGHVDHGKTTLTAAISIYCSKVNKDAKALKYEDIDNAPEEKARGITINARHIEYETAGMHYAHVDCPGHADYIKNMITGAAQMDAAVLLVAADSGAEPQTKEHLLLAQRMGINKIIVFLNKLDLADPELVELVEVEVLELVEKYGFPGDTPIVKGSAFGAMSNPDDPEATKCIKELLETMDNYFDLPQRDIDKPFLLAVEDVFSISGRGTVATGRIERGVIKVGQEVEIVGIRETRKTTVTGVEMFQKILEQGQAGDNVGLLLRGVDKKDIERGQVIAAIGTITPHKKFKASIYCLTKEEGGRHKPFFSGYRPQFFFRTTDVTGMVSLEGKEMVMPGDNVDIVVELISSIAMDKNVEFAVREGGRTVASGRILEILE</sequence>
<protein>
    <recommendedName>
        <fullName evidence="2">Elongation factor Tu</fullName>
        <shortName evidence="2">EF-Tu</shortName>
        <ecNumber evidence="2">3.6.5.3</ecNumber>
    </recommendedName>
</protein>
<organism>
    <name type="scientific">Borrelia turicatae (strain 91E135)</name>
    <dbReference type="NCBI Taxonomy" id="314724"/>
    <lineage>
        <taxon>Bacteria</taxon>
        <taxon>Pseudomonadati</taxon>
        <taxon>Spirochaetota</taxon>
        <taxon>Spirochaetia</taxon>
        <taxon>Spirochaetales</taxon>
        <taxon>Borreliaceae</taxon>
        <taxon>Borrelia</taxon>
    </lineage>
</organism>